<accession>Q8D954</accession>
<protein>
    <recommendedName>
        <fullName evidence="1">sn-glycerol-3-phosphate import ATP-binding protein UgpC</fullName>
        <ecNumber evidence="1">7.6.2.10</ecNumber>
    </recommendedName>
</protein>
<keyword id="KW-0067">ATP-binding</keyword>
<keyword id="KW-0997">Cell inner membrane</keyword>
<keyword id="KW-1003">Cell membrane</keyword>
<keyword id="KW-0472">Membrane</keyword>
<keyword id="KW-0547">Nucleotide-binding</keyword>
<keyword id="KW-0762">Sugar transport</keyword>
<keyword id="KW-1278">Translocase</keyword>
<keyword id="KW-0813">Transport</keyword>
<comment type="function">
    <text evidence="1">Part of the ABC transporter complex UgpBAEC involved in sn-glycerol-3-phosphate (G3P) import. Responsible for energy coupling to the transport system.</text>
</comment>
<comment type="catalytic activity">
    <reaction evidence="1">
        <text>sn-glycerol 3-phosphate(out) + ATP + H2O = sn-glycerol 3-phosphate(in) + ADP + phosphate + H(+)</text>
        <dbReference type="Rhea" id="RHEA:21668"/>
        <dbReference type="ChEBI" id="CHEBI:15377"/>
        <dbReference type="ChEBI" id="CHEBI:15378"/>
        <dbReference type="ChEBI" id="CHEBI:30616"/>
        <dbReference type="ChEBI" id="CHEBI:43474"/>
        <dbReference type="ChEBI" id="CHEBI:57597"/>
        <dbReference type="ChEBI" id="CHEBI:456216"/>
        <dbReference type="EC" id="7.6.2.10"/>
    </reaction>
</comment>
<comment type="subunit">
    <text evidence="1">The complex is composed of two ATP-binding proteins (UgpC), two transmembrane proteins (UgpA and UgpE) and a solute-binding protein (UgpB).</text>
</comment>
<comment type="subcellular location">
    <subcellularLocation>
        <location evidence="1">Cell inner membrane</location>
        <topology evidence="1">Peripheral membrane protein</topology>
    </subcellularLocation>
</comment>
<comment type="similarity">
    <text evidence="1">Belongs to the ABC transporter superfamily. sn-glycerol-3-phosphate importer (TC 3.A.1.1.3) family.</text>
</comment>
<comment type="sequence caution" evidence="2">
    <conflict type="erroneous initiation">
        <sequence resource="EMBL-CDS" id="AAO11096"/>
    </conflict>
    <text>Extended N-terminus.</text>
</comment>
<name>UGPC_VIBVU</name>
<dbReference type="EC" id="7.6.2.10" evidence="1"/>
<dbReference type="EMBL" id="AE016795">
    <property type="protein sequence ID" value="AAO11096.2"/>
    <property type="status" value="ALT_INIT"/>
    <property type="molecule type" value="Genomic_DNA"/>
</dbReference>
<dbReference type="RefSeq" id="WP_011080590.1">
    <property type="nucleotide sequence ID" value="NC_004459.3"/>
</dbReference>
<dbReference type="SMR" id="Q8D954"/>
<dbReference type="KEGG" id="vvu:VV1_2752"/>
<dbReference type="HOGENOM" id="CLU_000604_1_1_6"/>
<dbReference type="Proteomes" id="UP000002275">
    <property type="component" value="Chromosome 1"/>
</dbReference>
<dbReference type="GO" id="GO:0055052">
    <property type="term" value="C:ATP-binding cassette (ABC) transporter complex, substrate-binding subunit-containing"/>
    <property type="evidence" value="ECO:0007669"/>
    <property type="project" value="TreeGrafter"/>
</dbReference>
<dbReference type="GO" id="GO:0015430">
    <property type="term" value="F:ABC-type glycerol-3-phosphate transporter activity"/>
    <property type="evidence" value="ECO:0007669"/>
    <property type="project" value="UniProtKB-EC"/>
</dbReference>
<dbReference type="GO" id="GO:0005524">
    <property type="term" value="F:ATP binding"/>
    <property type="evidence" value="ECO:0007669"/>
    <property type="project" value="UniProtKB-KW"/>
</dbReference>
<dbReference type="GO" id="GO:0016887">
    <property type="term" value="F:ATP hydrolysis activity"/>
    <property type="evidence" value="ECO:0007669"/>
    <property type="project" value="InterPro"/>
</dbReference>
<dbReference type="GO" id="GO:0008643">
    <property type="term" value="P:carbohydrate transport"/>
    <property type="evidence" value="ECO:0007669"/>
    <property type="project" value="InterPro"/>
</dbReference>
<dbReference type="GO" id="GO:0001407">
    <property type="term" value="P:glycerophosphodiester transmembrane transport"/>
    <property type="evidence" value="ECO:0007669"/>
    <property type="project" value="TreeGrafter"/>
</dbReference>
<dbReference type="CDD" id="cd03301">
    <property type="entry name" value="ABC_MalK_N"/>
    <property type="match status" value="1"/>
</dbReference>
<dbReference type="FunFam" id="3.40.50.300:FF:000042">
    <property type="entry name" value="Maltose/maltodextrin ABC transporter, ATP-binding protein"/>
    <property type="match status" value="1"/>
</dbReference>
<dbReference type="Gene3D" id="2.40.50.100">
    <property type="match status" value="1"/>
</dbReference>
<dbReference type="Gene3D" id="2.40.50.140">
    <property type="entry name" value="Nucleic acid-binding proteins"/>
    <property type="match status" value="1"/>
</dbReference>
<dbReference type="Gene3D" id="3.40.50.300">
    <property type="entry name" value="P-loop containing nucleotide triphosphate hydrolases"/>
    <property type="match status" value="1"/>
</dbReference>
<dbReference type="InterPro" id="IPR003593">
    <property type="entry name" value="AAA+_ATPase"/>
</dbReference>
<dbReference type="InterPro" id="IPR003439">
    <property type="entry name" value="ABC_transporter-like_ATP-bd"/>
</dbReference>
<dbReference type="InterPro" id="IPR017871">
    <property type="entry name" value="ABC_transporter-like_CS"/>
</dbReference>
<dbReference type="InterPro" id="IPR015855">
    <property type="entry name" value="ABC_transpr_MalK-like"/>
</dbReference>
<dbReference type="InterPro" id="IPR047641">
    <property type="entry name" value="ABC_transpr_MalK/UgpC-like"/>
</dbReference>
<dbReference type="InterPro" id="IPR008995">
    <property type="entry name" value="Mo/tungstate-bd_C_term_dom"/>
</dbReference>
<dbReference type="InterPro" id="IPR012340">
    <property type="entry name" value="NA-bd_OB-fold"/>
</dbReference>
<dbReference type="InterPro" id="IPR040582">
    <property type="entry name" value="OB_MalK-like"/>
</dbReference>
<dbReference type="InterPro" id="IPR027417">
    <property type="entry name" value="P-loop_NTPase"/>
</dbReference>
<dbReference type="NCBIfam" id="NF008653">
    <property type="entry name" value="PRK11650.1"/>
    <property type="match status" value="1"/>
</dbReference>
<dbReference type="PANTHER" id="PTHR43875">
    <property type="entry name" value="MALTODEXTRIN IMPORT ATP-BINDING PROTEIN MSMX"/>
    <property type="match status" value="1"/>
</dbReference>
<dbReference type="PANTHER" id="PTHR43875:SF12">
    <property type="entry name" value="SN-GLYCEROL-3-PHOSPHATE IMPORT ATP-BINDING PROTEIN UGPC"/>
    <property type="match status" value="1"/>
</dbReference>
<dbReference type="Pfam" id="PF00005">
    <property type="entry name" value="ABC_tran"/>
    <property type="match status" value="1"/>
</dbReference>
<dbReference type="Pfam" id="PF17912">
    <property type="entry name" value="OB_MalK"/>
    <property type="match status" value="1"/>
</dbReference>
<dbReference type="SMART" id="SM00382">
    <property type="entry name" value="AAA"/>
    <property type="match status" value="1"/>
</dbReference>
<dbReference type="SUPFAM" id="SSF50331">
    <property type="entry name" value="MOP-like"/>
    <property type="match status" value="1"/>
</dbReference>
<dbReference type="SUPFAM" id="SSF52540">
    <property type="entry name" value="P-loop containing nucleoside triphosphate hydrolases"/>
    <property type="match status" value="1"/>
</dbReference>
<dbReference type="PROSITE" id="PS00211">
    <property type="entry name" value="ABC_TRANSPORTER_1"/>
    <property type="match status" value="1"/>
</dbReference>
<dbReference type="PROSITE" id="PS50893">
    <property type="entry name" value="ABC_TRANSPORTER_2"/>
    <property type="match status" value="1"/>
</dbReference>
<dbReference type="PROSITE" id="PS51315">
    <property type="entry name" value="UGPC"/>
    <property type="match status" value="1"/>
</dbReference>
<sequence length="372" mass="41140">MLDIQQLVKTYENGHQAVKGVDLAIHQGEFIVLVGPSGCGKSSILRSIAGLEAITSGEIHLAGRRVDNEKPANRDIAMVFQNYALYPHMSVYDNLAYGLKNRGVSKATIAEKIAKVAKTLKIEEYLDRKPAKLSGGQRQRVAMGRAIVRDPQLFLFDEPLSNLDAALRAHMRLEIKKLQRELGVTSVYVTHDQVEAMTLADRIVVLKQGEIEQIGTPAEVYHQPASTFVASFIGSPAMNFLAASIRDGKLQLAGKQWSVPYDANLNCNTLTLGIRPEHASLQPVDDAIELSINIQVVEPLGPNQLVHGKINGEYGDEDFIAVTAEMPLTIGDNLPIWVRVEQLHLFDEQEKRIPISAQSPSVDTRQQQRQQQ</sequence>
<gene>
    <name evidence="1" type="primary">ugpC</name>
    <name type="ordered locus">VV1_2752</name>
</gene>
<proteinExistence type="inferred from homology"/>
<reference key="1">
    <citation type="submission" date="2002-12" db="EMBL/GenBank/DDBJ databases">
        <title>Complete genome sequence of Vibrio vulnificus CMCP6.</title>
        <authorList>
            <person name="Rhee J.H."/>
            <person name="Kim S.Y."/>
            <person name="Chung S.S."/>
            <person name="Kim J.J."/>
            <person name="Moon Y.H."/>
            <person name="Jeong H."/>
            <person name="Choy H.E."/>
        </authorList>
    </citation>
    <scope>NUCLEOTIDE SEQUENCE [LARGE SCALE GENOMIC DNA]</scope>
    <source>
        <strain>CMCP6</strain>
    </source>
</reference>
<feature type="chain" id="PRO_0000289787" description="sn-glycerol-3-phosphate import ATP-binding protein UgpC">
    <location>
        <begin position="1"/>
        <end position="372"/>
    </location>
</feature>
<feature type="domain" description="ABC transporter" evidence="1">
    <location>
        <begin position="2"/>
        <end position="233"/>
    </location>
</feature>
<feature type="binding site" evidence="1">
    <location>
        <begin position="35"/>
        <end position="42"/>
    </location>
    <ligand>
        <name>ATP</name>
        <dbReference type="ChEBI" id="CHEBI:30616"/>
    </ligand>
</feature>
<evidence type="ECO:0000255" key="1">
    <source>
        <dbReference type="HAMAP-Rule" id="MF_01727"/>
    </source>
</evidence>
<evidence type="ECO:0000305" key="2"/>
<organism>
    <name type="scientific">Vibrio vulnificus (strain CMCP6)</name>
    <dbReference type="NCBI Taxonomy" id="216895"/>
    <lineage>
        <taxon>Bacteria</taxon>
        <taxon>Pseudomonadati</taxon>
        <taxon>Pseudomonadota</taxon>
        <taxon>Gammaproteobacteria</taxon>
        <taxon>Vibrionales</taxon>
        <taxon>Vibrionaceae</taxon>
        <taxon>Vibrio</taxon>
    </lineage>
</organism>